<comment type="function">
    <text evidence="1">Transmembrane component of the tectonic-like complex, a complex localized at the transition zone of primary cilia and acting as a barrier that prevents diffusion of transmembrane proteins between the cilia and plasma membranes. Required for ciliogenesis and sonic hedgehog/SHH signaling (By similarity).</text>
</comment>
<comment type="subunit">
    <text evidence="1">Part of the tectonic-like complex (also named B9 complex).</text>
</comment>
<comment type="subcellular location">
    <subcellularLocation>
        <location evidence="1">Cell projection</location>
        <location evidence="1">Cilium membrane</location>
        <topology evidence="1">Multi-pass membrane protein</topology>
    </subcellularLocation>
    <text evidence="1">Localizes to the transition zone of primary cilia.</text>
</comment>
<comment type="similarity">
    <text evidence="3">Belongs to the TMEM17 family.</text>
</comment>
<name>TM17B_DANRE</name>
<sequence length="191" mass="22550">MDLPEPIRRRLGDFSRTVFVDQSRTQPSFEEHANFLDQNKDVVSSLPLQMSLYFNMWFFPFWWISEVVMLDLKYSALADYYKFILITILIVMTLIEAIRLYLGNAGNLQEKVPELAGFWLLTFLLQFPLILFQLFNEAVLVQPLERGVHIILALFIFAEVLFGFVALRTMVRHTESRFHLRQFHGIQELRT</sequence>
<accession>A5D6V4</accession>
<keyword id="KW-1003">Cell membrane</keyword>
<keyword id="KW-0966">Cell projection</keyword>
<keyword id="KW-0969">Cilium</keyword>
<keyword id="KW-0970">Cilium biogenesis/degradation</keyword>
<keyword id="KW-0472">Membrane</keyword>
<keyword id="KW-1185">Reference proteome</keyword>
<keyword id="KW-0812">Transmembrane</keyword>
<keyword id="KW-1133">Transmembrane helix</keyword>
<gene>
    <name type="primary">Tmem17b</name>
    <name type="ORF">zgc:163141</name>
</gene>
<proteinExistence type="evidence at transcript level"/>
<protein>
    <recommendedName>
        <fullName>Transmembrane protein 17B</fullName>
    </recommendedName>
</protein>
<feature type="chain" id="PRO_0000415838" description="Transmembrane protein 17B">
    <location>
        <begin position="1"/>
        <end position="191"/>
    </location>
</feature>
<feature type="transmembrane region" description="Helical" evidence="2">
    <location>
        <begin position="50"/>
        <end position="70"/>
    </location>
</feature>
<feature type="transmembrane region" description="Helical" evidence="2">
    <location>
        <begin position="83"/>
        <end position="103"/>
    </location>
</feature>
<feature type="transmembrane region" description="Helical" evidence="2">
    <location>
        <begin position="115"/>
        <end position="135"/>
    </location>
</feature>
<feature type="transmembrane region" description="Helical" evidence="2">
    <location>
        <begin position="147"/>
        <end position="167"/>
    </location>
</feature>
<reference key="1">
    <citation type="journal article" date="2013" name="Nature">
        <title>The zebrafish reference genome sequence and its relationship to the human genome.</title>
        <authorList>
            <person name="Howe K."/>
            <person name="Clark M.D."/>
            <person name="Torroja C.F."/>
            <person name="Torrance J."/>
            <person name="Berthelot C."/>
            <person name="Muffato M."/>
            <person name="Collins J.E."/>
            <person name="Humphray S."/>
            <person name="McLaren K."/>
            <person name="Matthews L."/>
            <person name="McLaren S."/>
            <person name="Sealy I."/>
            <person name="Caccamo M."/>
            <person name="Churcher C."/>
            <person name="Scott C."/>
            <person name="Barrett J.C."/>
            <person name="Koch R."/>
            <person name="Rauch G.J."/>
            <person name="White S."/>
            <person name="Chow W."/>
            <person name="Kilian B."/>
            <person name="Quintais L.T."/>
            <person name="Guerra-Assuncao J.A."/>
            <person name="Zhou Y."/>
            <person name="Gu Y."/>
            <person name="Yen J."/>
            <person name="Vogel J.H."/>
            <person name="Eyre T."/>
            <person name="Redmond S."/>
            <person name="Banerjee R."/>
            <person name="Chi J."/>
            <person name="Fu B."/>
            <person name="Langley E."/>
            <person name="Maguire S.F."/>
            <person name="Laird G.K."/>
            <person name="Lloyd D."/>
            <person name="Kenyon E."/>
            <person name="Donaldson S."/>
            <person name="Sehra H."/>
            <person name="Almeida-King J."/>
            <person name="Loveland J."/>
            <person name="Trevanion S."/>
            <person name="Jones M."/>
            <person name="Quail M."/>
            <person name="Willey D."/>
            <person name="Hunt A."/>
            <person name="Burton J."/>
            <person name="Sims S."/>
            <person name="McLay K."/>
            <person name="Plumb B."/>
            <person name="Davis J."/>
            <person name="Clee C."/>
            <person name="Oliver K."/>
            <person name="Clark R."/>
            <person name="Riddle C."/>
            <person name="Elliot D."/>
            <person name="Threadgold G."/>
            <person name="Harden G."/>
            <person name="Ware D."/>
            <person name="Begum S."/>
            <person name="Mortimore B."/>
            <person name="Kerry G."/>
            <person name="Heath P."/>
            <person name="Phillimore B."/>
            <person name="Tracey A."/>
            <person name="Corby N."/>
            <person name="Dunn M."/>
            <person name="Johnson C."/>
            <person name="Wood J."/>
            <person name="Clark S."/>
            <person name="Pelan S."/>
            <person name="Griffiths G."/>
            <person name="Smith M."/>
            <person name="Glithero R."/>
            <person name="Howden P."/>
            <person name="Barker N."/>
            <person name="Lloyd C."/>
            <person name="Stevens C."/>
            <person name="Harley J."/>
            <person name="Holt K."/>
            <person name="Panagiotidis G."/>
            <person name="Lovell J."/>
            <person name="Beasley H."/>
            <person name="Henderson C."/>
            <person name="Gordon D."/>
            <person name="Auger K."/>
            <person name="Wright D."/>
            <person name="Collins J."/>
            <person name="Raisen C."/>
            <person name="Dyer L."/>
            <person name="Leung K."/>
            <person name="Robertson L."/>
            <person name="Ambridge K."/>
            <person name="Leongamornlert D."/>
            <person name="McGuire S."/>
            <person name="Gilderthorp R."/>
            <person name="Griffiths C."/>
            <person name="Manthravadi D."/>
            <person name="Nichol S."/>
            <person name="Barker G."/>
            <person name="Whitehead S."/>
            <person name="Kay M."/>
            <person name="Brown J."/>
            <person name="Murnane C."/>
            <person name="Gray E."/>
            <person name="Humphries M."/>
            <person name="Sycamore N."/>
            <person name="Barker D."/>
            <person name="Saunders D."/>
            <person name="Wallis J."/>
            <person name="Babbage A."/>
            <person name="Hammond S."/>
            <person name="Mashreghi-Mohammadi M."/>
            <person name="Barr L."/>
            <person name="Martin S."/>
            <person name="Wray P."/>
            <person name="Ellington A."/>
            <person name="Matthews N."/>
            <person name="Ellwood M."/>
            <person name="Woodmansey R."/>
            <person name="Clark G."/>
            <person name="Cooper J."/>
            <person name="Tromans A."/>
            <person name="Grafham D."/>
            <person name="Skuce C."/>
            <person name="Pandian R."/>
            <person name="Andrews R."/>
            <person name="Harrison E."/>
            <person name="Kimberley A."/>
            <person name="Garnett J."/>
            <person name="Fosker N."/>
            <person name="Hall R."/>
            <person name="Garner P."/>
            <person name="Kelly D."/>
            <person name="Bird C."/>
            <person name="Palmer S."/>
            <person name="Gehring I."/>
            <person name="Berger A."/>
            <person name="Dooley C.M."/>
            <person name="Ersan-Urun Z."/>
            <person name="Eser C."/>
            <person name="Geiger H."/>
            <person name="Geisler M."/>
            <person name="Karotki L."/>
            <person name="Kirn A."/>
            <person name="Konantz J."/>
            <person name="Konantz M."/>
            <person name="Oberlander M."/>
            <person name="Rudolph-Geiger S."/>
            <person name="Teucke M."/>
            <person name="Lanz C."/>
            <person name="Raddatz G."/>
            <person name="Osoegawa K."/>
            <person name="Zhu B."/>
            <person name="Rapp A."/>
            <person name="Widaa S."/>
            <person name="Langford C."/>
            <person name="Yang F."/>
            <person name="Schuster S.C."/>
            <person name="Carter N.P."/>
            <person name="Harrow J."/>
            <person name="Ning Z."/>
            <person name="Herrero J."/>
            <person name="Searle S.M."/>
            <person name="Enright A."/>
            <person name="Geisler R."/>
            <person name="Plasterk R.H."/>
            <person name="Lee C."/>
            <person name="Westerfield M."/>
            <person name="de Jong P.J."/>
            <person name="Zon L.I."/>
            <person name="Postlethwait J.H."/>
            <person name="Nusslein-Volhard C."/>
            <person name="Hubbard T.J."/>
            <person name="Roest Crollius H."/>
            <person name="Rogers J."/>
            <person name="Stemple D.L."/>
        </authorList>
    </citation>
    <scope>NUCLEOTIDE SEQUENCE [LARGE SCALE GENOMIC DNA]</scope>
    <source>
        <strain>Tuebingen</strain>
    </source>
</reference>
<reference key="2">
    <citation type="submission" date="2007-04" db="EMBL/GenBank/DDBJ databases">
        <authorList>
            <consortium name="NIH - Zebrafish Gene Collection (ZGC) project"/>
        </authorList>
    </citation>
    <scope>NUCLEOTIDE SEQUENCE [LARGE SCALE MRNA]</scope>
    <source>
        <tissue>Embryo</tissue>
    </source>
</reference>
<evidence type="ECO:0000250" key="1"/>
<evidence type="ECO:0000255" key="2"/>
<evidence type="ECO:0000305" key="3"/>
<dbReference type="EMBL" id="CR376836">
    <property type="status" value="NOT_ANNOTATED_CDS"/>
    <property type="molecule type" value="Genomic_DNA"/>
</dbReference>
<dbReference type="EMBL" id="BC139898">
    <property type="protein sequence ID" value="AAI39899.1"/>
    <property type="molecule type" value="mRNA"/>
</dbReference>
<dbReference type="RefSeq" id="NP_001091861.1">
    <property type="nucleotide sequence ID" value="NM_001098391.1"/>
</dbReference>
<dbReference type="FunCoup" id="A5D6V4">
    <property type="interactions" value="275"/>
</dbReference>
<dbReference type="STRING" id="7955.ENSDARP00000151288"/>
<dbReference type="PaxDb" id="7955-ENSDARP00000103119"/>
<dbReference type="Ensembl" id="ENSDART00000193901">
    <property type="protein sequence ID" value="ENSDARP00000151288"/>
    <property type="gene ID" value="ENSDARG00000116334"/>
</dbReference>
<dbReference type="GeneID" id="568092"/>
<dbReference type="KEGG" id="dre:568092"/>
<dbReference type="AGR" id="ZFIN:ZDB-GENE-070615-15"/>
<dbReference type="CTD" id="200728"/>
<dbReference type="ZFIN" id="ZDB-GENE-070615-15">
    <property type="gene designation" value="tmem17"/>
</dbReference>
<dbReference type="eggNOG" id="KOG4694">
    <property type="taxonomic scope" value="Eukaryota"/>
</dbReference>
<dbReference type="HOGENOM" id="CLU_092836_0_0_1"/>
<dbReference type="InParanoid" id="A5D6V4"/>
<dbReference type="OMA" id="LWWVSCI"/>
<dbReference type="OrthoDB" id="311720at2759"/>
<dbReference type="PhylomeDB" id="A5D6V4"/>
<dbReference type="TreeFam" id="TF323824"/>
<dbReference type="PRO" id="PR:A5D6V4"/>
<dbReference type="Proteomes" id="UP000000437">
    <property type="component" value="Chromosome 25"/>
</dbReference>
<dbReference type="Bgee" id="ENSDARG00000116334">
    <property type="expression patterns" value="Expressed in testis and 26 other cell types or tissues"/>
</dbReference>
<dbReference type="GO" id="GO:0060170">
    <property type="term" value="C:ciliary membrane"/>
    <property type="evidence" value="ECO:0000250"/>
    <property type="project" value="UniProtKB"/>
</dbReference>
<dbReference type="GO" id="GO:0035869">
    <property type="term" value="C:ciliary transition zone"/>
    <property type="evidence" value="ECO:0000250"/>
    <property type="project" value="UniProtKB"/>
</dbReference>
<dbReference type="GO" id="GO:0036038">
    <property type="term" value="C:MKS complex"/>
    <property type="evidence" value="ECO:0000250"/>
    <property type="project" value="UniProtKB"/>
</dbReference>
<dbReference type="GO" id="GO:0060271">
    <property type="term" value="P:cilium assembly"/>
    <property type="evidence" value="ECO:0000250"/>
    <property type="project" value="UniProtKB"/>
</dbReference>
<dbReference type="GO" id="GO:1905515">
    <property type="term" value="P:non-motile cilium assembly"/>
    <property type="evidence" value="ECO:0000318"/>
    <property type="project" value="GO_Central"/>
</dbReference>
<dbReference type="GO" id="GO:0007224">
    <property type="term" value="P:smoothened signaling pathway"/>
    <property type="evidence" value="ECO:0000250"/>
    <property type="project" value="UniProtKB"/>
</dbReference>
<dbReference type="InterPro" id="IPR019184">
    <property type="entry name" value="Uncharacterised_TM-17"/>
</dbReference>
<dbReference type="PANTHER" id="PTHR13531">
    <property type="entry name" value="GEO07735P1-RELATED-RELATED"/>
    <property type="match status" value="1"/>
</dbReference>
<dbReference type="PANTHER" id="PTHR13531:SF14">
    <property type="entry name" value="TRANSMEMBRANE PROTEIN 17"/>
    <property type="match status" value="1"/>
</dbReference>
<dbReference type="Pfam" id="PF09799">
    <property type="entry name" value="Transmemb_17"/>
    <property type="match status" value="1"/>
</dbReference>
<organism>
    <name type="scientific">Danio rerio</name>
    <name type="common">Zebrafish</name>
    <name type="synonym">Brachydanio rerio</name>
    <dbReference type="NCBI Taxonomy" id="7955"/>
    <lineage>
        <taxon>Eukaryota</taxon>
        <taxon>Metazoa</taxon>
        <taxon>Chordata</taxon>
        <taxon>Craniata</taxon>
        <taxon>Vertebrata</taxon>
        <taxon>Euteleostomi</taxon>
        <taxon>Actinopterygii</taxon>
        <taxon>Neopterygii</taxon>
        <taxon>Teleostei</taxon>
        <taxon>Ostariophysi</taxon>
        <taxon>Cypriniformes</taxon>
        <taxon>Danionidae</taxon>
        <taxon>Danioninae</taxon>
        <taxon>Danio</taxon>
    </lineage>
</organism>